<comment type="function">
    <text evidence="6 7 8 9 10 12 13 14 15 16 17">Plays a crucial role in elastic fiber formation in tissue, and in the formation of ultrastructural connections between elastic laminae and smooth muscle cells in the aorta, therefore participates in terminal differentiation and maturation of smooth muscle cell (SMC) and in the mechanical properties and wall integrity maintenance of the aorta (PubMed:16478991, PubMed:19855011, PubMed:20019329, PubMed:26486174, PubMed:26711913, PubMed:28508064). In addition, is involved in the control of collagen fibril assembly in tissue throught proteolytic activation of LOX leading to cross- linking of collagen and elastin (PubMed:26178373, PubMed:26220971, PubMed:26690653, PubMed:26711913). Also promotes ELN coacervation and participates in the deposition of ELN coacervates on to microfibrils but also regulates ELN cross- linking through LOX interaction (PubMed:17324935). Moreover adheres to the cells through heparin binding in a calcium-dependent manner and regulates vascularlar smooth muscle cells proliferation through angiotensin signaling (PubMed:23636094).</text>
</comment>
<comment type="subunit">
    <text evidence="1 5 6 7 11 13 18">Homodimer; disulfide-linked (By similarity). Multimer; allows heparin binding (By similarity). Monomer (PubMed:17324935). Binds preferentially to p53 mutants (PubMed:10380882). Interacts with FBN1 (via N-terminal domain); this interaction inhibits EFEMP2 binding to LOX and ELN (By similarity). Interacts with ELN with moderate affinity; this interaction regulates ELN self-assembly maturation stage (PubMed:16478991, PubMed:17324935). Interacts with PCOLCE (PubMed:26220971). Interacts with collagen type IV trimer (COL4A1-COL4A1-COL4A2), NID2 and moderately with COL15A1-derived endostatin (PubMed:17324935). Interacts with EMILIN1; this interaction promotes the incorporation of EFEMP2 into the extracellular matrix (PubMed:28717224). Interacts with LTBP4; the LTBP4 long form (LTBP4L) has a stronger binding affinity than the LTBP4 short form and the LTBP4 long form promotes fibrillar deposition of EFEMP2 (PubMed:25713297). Interacts with LOX (via propeptide); this interaction is strong and facilitates formation of ternary complexes with ELN during elastic fiber assembly; this interaction limits interaction of EFEMP2 with FBLN5 (By similarity). Interacts with PITX2 (By similarity). Interacts with FBLN5 with moderate affinity (By similarity). Interacts with LOXL1 (via propeptide), LTBP1 and TGFB1 stronger than with LOXL2 and LTBP3 (By similarity).</text>
</comment>
<comment type="subcellular location">
    <subcellularLocation>
        <location evidence="7 12 15">Secreted</location>
        <location evidence="7 12 15">Extracellular space</location>
        <location evidence="7 12 15">Extracellular matrix</location>
    </subcellularLocation>
    <subcellularLocation>
        <location evidence="7">Secreted</location>
        <location evidence="7">Extracellular space</location>
        <location evidence="7">Extracellular matrix</location>
        <location evidence="7">Basement membrane</location>
    </subcellularLocation>
    <text evidence="7">Localizes on the microfibrils surrounding ELN cores.</text>
</comment>
<comment type="tissue specificity">
    <text evidence="7 12 15 16">Expressed in elastic fibers of the skin, near the dermal-epidermal junction, surrounding the hair follicles and throughout the dermis (PubMed:26178373). Expressed in tendon around tenocytes (PubMed:26711913). Prominently expressed in cartilage, bone, perichondrium and ligaments. Also detected in bone marrow stroma (PubMed:26690653). Expressed in aorta, lung, and esophagus (PubMed:17324935).</text>
</comment>
<comment type="developmental stage">
    <text evidence="7">At E(15), found in the perichondrium of the developing bone. At E(14) detected in the lung parenchyma.</text>
</comment>
<comment type="PTM">
    <text evidence="1">N-glycosylated; contains mostly complex-type glycans. Not O-glycosylated.</text>
</comment>
<comment type="PTM">
    <text evidence="1">Cleaved by ELANE; produces a 50-55 kDa fragment. Cleaved by MMP2 and MMP9; produces several fragments.</text>
</comment>
<comment type="disruption phenotype">
    <text evidence="6 8 9 10 12 13 14 15 16 17">Homozygous mice for the EFEMP2 gene appear to be outwardly normal (PubMed:16478991, PubMed:28508064). Homozygous mice exhibit severe lung and vascular defects including emphysema, artery tortuosity, irregularity, aneurysm, rupture, and resulting hemorrhages (PubMed:16478991, PubMed:19855011, PubMed:26178373, PubMed:28508064). Mice died perinatally (PubMed:16478991, PubMed:19855011). Mice with conditional knockout of EFEMP2, in vascular smooth muscle, grow normally, are fertile and exhibit an arterial stiffness (PubMed:19855011). Mice with conditional knockout of EFEMP2, in endothelial cell (EC) are healthy with an normal aorta (PubMed:20019329). Mice with conditional knockout of EFEMP2, in smooth muscle cells, die spontaneously at approximately 2 months of age despite absence of embryonic or neonatal lethality. Aortae exhibit large aneurysms exclusively in the ascending aorta. Aneurysms are observed with complete penetrance (PubMed:20019329, PubMed:23636094, PubMed:26220971, PubMed:26486174). Homozygous mice for the EFEMP2 gene die within 1-2 days after birth. Embryos at 19 dpc show bilateral forelimb contractures (PubMed:26690653, PubMed:26711913). Newborn homozygous mice demonstrate normal morphology of the skeleton (PubMed:26690653).</text>
</comment>
<comment type="miscellaneous">
    <text evidence="10">Aneurysm may be prevent with postnatal administration of ACE inhibitor and/or angiotensin II receptor blocker (ARB).</text>
</comment>
<comment type="similarity">
    <text evidence="21">Belongs to the fibulin family.</text>
</comment>
<evidence type="ECO:0000250" key="1">
    <source>
        <dbReference type="UniProtKB" id="O95967"/>
    </source>
</evidence>
<evidence type="ECO:0000255" key="2"/>
<evidence type="ECO:0000255" key="3">
    <source>
        <dbReference type="PROSITE-ProRule" id="PRU00076"/>
    </source>
</evidence>
<evidence type="ECO:0000256" key="4">
    <source>
        <dbReference type="SAM" id="MobiDB-lite"/>
    </source>
</evidence>
<evidence type="ECO:0000269" key="5">
    <source>
    </source>
</evidence>
<evidence type="ECO:0000269" key="6">
    <source>
    </source>
</evidence>
<evidence type="ECO:0000269" key="7">
    <source>
    </source>
</evidence>
<evidence type="ECO:0000269" key="8">
    <source>
    </source>
</evidence>
<evidence type="ECO:0000269" key="9">
    <source>
    </source>
</evidence>
<evidence type="ECO:0000269" key="10">
    <source>
    </source>
</evidence>
<evidence type="ECO:0000269" key="11">
    <source>
    </source>
</evidence>
<evidence type="ECO:0000269" key="12">
    <source>
    </source>
</evidence>
<evidence type="ECO:0000269" key="13">
    <source>
    </source>
</evidence>
<evidence type="ECO:0000269" key="14">
    <source>
    </source>
</evidence>
<evidence type="ECO:0000269" key="15">
    <source>
    </source>
</evidence>
<evidence type="ECO:0000269" key="16">
    <source>
    </source>
</evidence>
<evidence type="ECO:0000269" key="17">
    <source>
    </source>
</evidence>
<evidence type="ECO:0000269" key="18">
    <source>
    </source>
</evidence>
<evidence type="ECO:0000303" key="19">
    <source>
    </source>
</evidence>
<evidence type="ECO:0000303" key="20">
    <source>
    </source>
</evidence>
<evidence type="ECO:0000305" key="21"/>
<evidence type="ECO:0000312" key="22">
    <source>
        <dbReference type="MGI" id="MGI:1891209"/>
    </source>
</evidence>
<sequence length="443" mass="49425">MLPFASCLPGSLLLWAFLLLLLGAASPQDPEEPDSYTECTDGYEWDADSQHCRDVNECLTIPEACKGEMKCINHYGGYLCLPRSAAVISDLHGEGPPPPAAHAQQPNPCPQGYEPDEQESCVDVDECTQALHDCRPSQDCHNLPGSYQCTCPDGYRKIGPECVDIDECRYRYCQHRCVNLPGSFRCQCEPGFQLGPNNRSCVDVNECDMGAPCEQRCFNSYGTFLCRCNQGYELHRDGFSCSDIDECGYSSYLCQYRCVNEPGRFSCHCPQGYQLLATRLCQDIDECETGAHQCSEAQTCVNFHGGYRCVDTNRCVEPYVQVSDNRCLCPASNPLCREQPSSIVHRYMSITSERSVPADVFQIQATSVYPGAYNAFQIRSGNTQGDFYIRQINNVSAMLVLARPVTGPREYVLDLEMVTMNSLMSYRASSVLRLTVFVGAYTF</sequence>
<gene>
    <name evidence="22" type="primary">Efemp2</name>
    <name type="synonym">Fbln4</name>
    <name evidence="19" type="synonym">Mbp1</name>
</gene>
<reference key="1">
    <citation type="journal article" date="1999" name="Oncogene">
        <title>MBP1: a novel mutant p53-specific protein partner with oncogenic properties.</title>
        <authorList>
            <person name="Gallagher W.M."/>
            <person name="Argentini M."/>
            <person name="Sierra V."/>
            <person name="Bracco L."/>
            <person name="Debussche L."/>
            <person name="Conseiller E."/>
        </authorList>
    </citation>
    <scope>NUCLEOTIDE SEQUENCE [MRNA]</scope>
    <scope>INTERACTION WITH P53 MUTANTS</scope>
    <source>
        <strain>C57BL/6J</strain>
    </source>
</reference>
<reference key="2">
    <citation type="journal article" date="2004" name="Genome Res.">
        <title>The status, quality, and expansion of the NIH full-length cDNA project: the Mammalian Gene Collection (MGC).</title>
        <authorList>
            <consortium name="The MGC Project Team"/>
        </authorList>
    </citation>
    <scope>NUCLEOTIDE SEQUENCE [LARGE SCALE MRNA]</scope>
    <source>
        <strain>FVB/N</strain>
        <tissue>Mammary gland</tissue>
    </source>
</reference>
<reference key="3">
    <citation type="journal article" date="2007" name="J. Biol. Chem.">
        <title>A comparative analysis of the fibulin protein family. Biochemical characterization, binding interactions, and tissue localization.</title>
        <authorList>
            <person name="Kobayashi N."/>
            <person name="Kostka G."/>
            <person name="Garbe J.H."/>
            <person name="Keene D.R."/>
            <person name="Baechinger H.P."/>
            <person name="Hanisch F.G."/>
            <person name="Markova D."/>
            <person name="Tsuda T."/>
            <person name="Timpl R."/>
            <person name="Chu M.L."/>
            <person name="Sasaki T."/>
        </authorList>
    </citation>
    <scope>PROTEIN SEQUENCE OF 28-35</scope>
    <scope>PYROGLUTAMATE FORMATION AT GLN-28</scope>
    <scope>SUBUNIT</scope>
    <scope>INTERACTION WITH ELN; NID2; COLLAGEN TYPE IV TRIMER AND COL15A1-DERIVED ENDOSTATIN</scope>
    <scope>SUBCELLULAR LOCATION</scope>
    <scope>TISSUE SPECIFICITY</scope>
    <scope>DEVELOPMENTAL STAGE</scope>
</reference>
<reference key="4">
    <citation type="journal article" date="2006" name="Mol. Cell. Biol.">
        <title>Targeted disruption of fibulin-4 abolishes elastogenesis and causes perinatal lethality in mice.</title>
        <authorList>
            <person name="McLaughlin P.J."/>
            <person name="Chen Q."/>
            <person name="Horiguchi M."/>
            <person name="Starcher B.C."/>
            <person name="Stanton J.B."/>
            <person name="Broekelmann T.J."/>
            <person name="Marmorstein A.D."/>
            <person name="McKay B."/>
            <person name="Mecham R."/>
            <person name="Nakamura T."/>
            <person name="Marmorstein L.Y."/>
        </authorList>
    </citation>
    <scope>DISRUPTION PHENOTYPE</scope>
    <scope>FUNCTION</scope>
    <scope>INTERACTION WITH ELN</scope>
</reference>
<reference key="5">
    <citation type="journal article" date="2009" name="Proc. Natl. Acad. Sci. U.S.A.">
        <title>Fibulin-4 conducts proper elastogenesis via interaction with cross-linking enzyme lysyl oxidase.</title>
        <authorList>
            <person name="Horiguchi M."/>
            <person name="Inoue T."/>
            <person name="Ohbayashi T."/>
            <person name="Hirai M."/>
            <person name="Noda K."/>
            <person name="Marmorstein L.Y."/>
            <person name="Yabe D."/>
            <person name="Takagi K."/>
            <person name="Akama T.O."/>
            <person name="Kita T."/>
            <person name="Kimura T."/>
            <person name="Nakamura T."/>
        </authorList>
    </citation>
    <scope>DISRUPTION PHENOTYPE</scope>
    <scope>FUNCTION</scope>
</reference>
<reference key="6">
    <citation type="journal article" date="2010" name="Circ. Res.">
        <title>Fibulin-4 deficiency results in ascending aortic aneurysms: a potential link between abnormal smooth muscle cell phenotype and aneurysm progression.</title>
        <authorList>
            <person name="Huang J."/>
            <person name="Davis E.C."/>
            <person name="Chapman S.L."/>
            <person name="Budatha M."/>
            <person name="Marmorstein L.Y."/>
            <person name="Word R.A."/>
            <person name="Yanagisawa H."/>
        </authorList>
    </citation>
    <scope>DISRUPTION PHENOTYPE</scope>
    <scope>FUNCTION</scope>
</reference>
<reference key="7">
    <citation type="journal article" date="2013" name="Sci. Transl. Med.">
        <title>Angiotensin-converting enzyme-induced activation of local angiotensin signaling is required for ascending aortic aneurysms in fibulin-4-deficient mice.</title>
        <authorList>
            <person name="Huang J."/>
            <person name="Yamashiro Y."/>
            <person name="Papke C.L."/>
            <person name="Ikeda Y."/>
            <person name="Lin Y."/>
            <person name="Patel M."/>
            <person name="Inagami T."/>
            <person name="Le V.P."/>
            <person name="Wagenseil J.E."/>
            <person name="Yanagisawa H."/>
        </authorList>
    </citation>
    <scope>DISRUPTION PHENOTYPE</scope>
    <scope>FUNCTION</scope>
    <scope>MISCELLANEOUS</scope>
</reference>
<reference key="8">
    <citation type="journal article" date="2015" name="Dis. Model. Mech.">
        <title>Modeling autosomal recessive cutis laxa type 1C in mice reveals distinct functions for Ltbp-4 isoforms.</title>
        <authorList>
            <person name="Bultmann-Mellin I."/>
            <person name="Conradi A."/>
            <person name="Maul A.C."/>
            <person name="Dinger K."/>
            <person name="Wempe F."/>
            <person name="Wohl A.P."/>
            <person name="Imhof T."/>
            <person name="Wunderlich F.T."/>
            <person name="Bunck A.C."/>
            <person name="Nakamura T."/>
            <person name="Koli K."/>
            <person name="Bloch W."/>
            <person name="Ghanem A."/>
            <person name="Heinz A."/>
            <person name="von Melchner H."/>
            <person name="Sengle G."/>
            <person name="Sterner-Kock A."/>
        </authorList>
    </citation>
    <scope>INTERACTION WITH LTBP4</scope>
</reference>
<reference key="9">
    <citation type="journal article" date="2015" name="Hum. Mol. Genet.">
        <title>Loss of fibulin-4 disrupts collagen synthesis and maturation: implications for pathology resulting from EFEMP2 mutations.</title>
        <authorList>
            <person name="Papke C.L."/>
            <person name="Tsunezumi J."/>
            <person name="Ringuette L.J."/>
            <person name="Nagaoka H."/>
            <person name="Terajima M."/>
            <person name="Yamashiro Y."/>
            <person name="Urquhart G."/>
            <person name="Yamauchi M."/>
            <person name="Davis E.C."/>
            <person name="Yanagisawa H."/>
        </authorList>
    </citation>
    <scope>DISRUPTION PHENOTYPE</scope>
    <scope>FUNCTION</scope>
    <scope>INTERACTION WITH PCOLCE</scope>
</reference>
<reference key="10">
    <citation type="journal article" date="2015" name="J. Biol. Chem.">
        <title>Fibulin-4 E57K Knock-in Mice Recapitulate Cutaneous, Vascular and Skeletal Defects of Recessive Cutis Laxa 1B with both Elastic Fiber and Collagen Fibril Abnormalities.</title>
        <authorList>
            <person name="Igoucheva O."/>
            <person name="Alexeev V."/>
            <person name="Halabi C.M."/>
            <person name="Adams S.M."/>
            <person name="Stoilov I."/>
            <person name="Sasaki T."/>
            <person name="Arita M."/>
            <person name="Donahue A."/>
            <person name="Mecham R.P."/>
            <person name="Birk D.E."/>
            <person name="Chu M.L."/>
        </authorList>
    </citation>
    <scope>DISRUPTION PHENOTYPE</scope>
    <scope>FUNCTION</scope>
    <scope>SUBCELLULAR LOCATION</scope>
    <scope>TISSUE SPECIFICITY</scope>
    <scope>MUTAGENESIS OF GLU-57</scope>
</reference>
<reference key="11">
    <citation type="journal article" date="2015" name="Sci. Signal.">
        <title>Abnormal mechanosensing and cofilin activation promote the progression of ascending aortic aneurysms in mice.</title>
        <authorList>
            <person name="Yamashiro Y."/>
            <person name="Papke C.L."/>
            <person name="Kim J."/>
            <person name="Ringuette L.J."/>
            <person name="Zhang Q.J."/>
            <person name="Liu Z.P."/>
            <person name="Mirzaei H."/>
            <person name="Wagenseil J.E."/>
            <person name="Davis E.C."/>
            <person name="Yanagisawa H."/>
        </authorList>
    </citation>
    <scope>DISRUPTION PHENOTYPE</scope>
    <scope>FUNCTION</scope>
</reference>
<reference key="12">
    <citation type="journal article" date="2016" name="Cell Tissue Res.">
        <title>Forelimb contractures and abnormal tendon collagen fibrillogenesis in fibulin-4 null mice.</title>
        <authorList>
            <person name="Markova D.Z."/>
            <person name="Pan T.C."/>
            <person name="Zhang R.Z."/>
            <person name="Zhang G."/>
            <person name="Sasaki T."/>
            <person name="Arita M."/>
            <person name="Birk D.E."/>
            <person name="Chu M.L."/>
        </authorList>
    </citation>
    <scope>DISRUPTION PHENOTYPE</scope>
    <scope>TISSUE SPECIFICITY</scope>
    <scope>FUNCTION</scope>
</reference>
<reference key="13">
    <citation type="journal article" date="2016" name="Matrix Biol.">
        <title>Loss of fibulin-4 results in abnormal collagen fibril assembly in bone, caused by impaired lysyl oxidase processing and collagen cross-linking.</title>
        <authorList>
            <person name="Sasaki T."/>
            <person name="Stoop R."/>
            <person name="Sakai T."/>
            <person name="Hess A."/>
            <person name="Deutzmann R."/>
            <person name="Schloetzer-Schrehardt U."/>
            <person name="Chu M.L."/>
            <person name="von der Mark K."/>
        </authorList>
    </citation>
    <scope>TISSUE SPECIFICITY</scope>
    <scope>SUBCELLULAR LOCATION</scope>
    <scope>DISRUPTION PHENOTYPE</scope>
    <scope>FUNCTION</scope>
</reference>
<reference key="14">
    <citation type="journal article" date="2017" name="Sci. Adv.">
        <title>Fibulin-4 is essential for maintaining arterial wall integrity in conduit but not muscular arteries.</title>
        <authorList>
            <person name="Halabi C.M."/>
            <person name="Broekelmann T.J."/>
            <person name="Lin M."/>
            <person name="Lee V.S."/>
            <person name="Chu M.L."/>
            <person name="Mecham R.P."/>
        </authorList>
    </citation>
    <scope>MUTAGENESIS OF GLU-57</scope>
    <scope>FUNCTION</scope>
</reference>
<reference key="15">
    <citation type="journal article" date="2017" name="Sci. Rep.">
        <title>Fibulin-4 deposition requires EMILIN-1 in the extracellular matrix of osteoblasts.</title>
        <authorList>
            <person name="Schiavinato A."/>
            <person name="Keene D.R."/>
            <person name="Imhof T."/>
            <person name="Doliana R."/>
            <person name="Sasaki T."/>
            <person name="Sengle G."/>
        </authorList>
    </citation>
    <scope>INTERACTION WITH EMILIN1</scope>
</reference>
<accession>Q9WVJ9</accession>
<organism>
    <name type="scientific">Mus musculus</name>
    <name type="common">Mouse</name>
    <dbReference type="NCBI Taxonomy" id="10090"/>
    <lineage>
        <taxon>Eukaryota</taxon>
        <taxon>Metazoa</taxon>
        <taxon>Chordata</taxon>
        <taxon>Craniata</taxon>
        <taxon>Vertebrata</taxon>
        <taxon>Euteleostomi</taxon>
        <taxon>Mammalia</taxon>
        <taxon>Eutheria</taxon>
        <taxon>Euarchontoglires</taxon>
        <taxon>Glires</taxon>
        <taxon>Rodentia</taxon>
        <taxon>Myomorpha</taxon>
        <taxon>Muroidea</taxon>
        <taxon>Muridae</taxon>
        <taxon>Murinae</taxon>
        <taxon>Mus</taxon>
        <taxon>Mus</taxon>
    </lineage>
</organism>
<feature type="signal peptide" evidence="7">
    <location>
        <begin position="1"/>
        <end position="27"/>
    </location>
</feature>
<feature type="chain" id="PRO_0000007576" description="EGF-containing fibulin-like extracellular matrix protein 2">
    <location>
        <begin position="28"/>
        <end position="443"/>
    </location>
</feature>
<feature type="domain" description="EGF-like 1; atypical" evidence="3">
    <location>
        <begin position="36"/>
        <end position="81"/>
    </location>
</feature>
<feature type="domain" description="EGF-like 2; calcium-binding" evidence="3">
    <location>
        <begin position="123"/>
        <end position="163"/>
    </location>
</feature>
<feature type="domain" description="EGF-like 3; calcium-binding" evidence="3">
    <location>
        <begin position="164"/>
        <end position="202"/>
    </location>
</feature>
<feature type="domain" description="EGF-like 4; calcium-binding" evidence="3">
    <location>
        <begin position="203"/>
        <end position="242"/>
    </location>
</feature>
<feature type="domain" description="EGF-like 5; calcium-binding" evidence="3">
    <location>
        <begin position="243"/>
        <end position="282"/>
    </location>
</feature>
<feature type="domain" description="EGF-like 6; calcium-binding" evidence="3">
    <location>
        <begin position="283"/>
        <end position="328"/>
    </location>
</feature>
<feature type="region of interest" description="Disordered" evidence="4">
    <location>
        <begin position="91"/>
        <end position="117"/>
    </location>
</feature>
<feature type="site" description="Cleavage; by ELANE" evidence="1">
    <location>
        <begin position="87"/>
        <end position="88"/>
    </location>
</feature>
<feature type="site" description="Cleavage; by MMP2, MMP3, MMP7, MMP9, MMP12" evidence="1">
    <location>
        <begin position="90"/>
        <end position="91"/>
    </location>
</feature>
<feature type="site" description="Cleavage" evidence="1">
    <location>
        <begin position="92"/>
        <end position="93"/>
    </location>
</feature>
<feature type="modified residue" description="Pyrrolidone carboxylic acid" evidence="7">
    <location>
        <position position="28"/>
    </location>
</feature>
<feature type="glycosylation site" description="N-linked (GlcNAc...) asparagine" evidence="2">
    <location>
        <position position="198"/>
    </location>
</feature>
<feature type="glycosylation site" description="N-linked (GlcNAc...) asparagine" evidence="2">
    <location>
        <position position="394"/>
    </location>
</feature>
<feature type="disulfide bond" evidence="3">
    <location>
        <begin position="58"/>
        <end position="121"/>
    </location>
</feature>
<feature type="disulfide bond" evidence="3">
    <location>
        <begin position="65"/>
        <end position="80"/>
    </location>
</feature>
<feature type="disulfide bond" evidence="3">
    <location>
        <begin position="71"/>
        <end position="109"/>
    </location>
</feature>
<feature type="disulfide bond" evidence="3">
    <location>
        <begin position="127"/>
        <end position="140"/>
    </location>
</feature>
<feature type="disulfide bond" evidence="3">
    <location>
        <begin position="134"/>
        <end position="149"/>
    </location>
</feature>
<feature type="disulfide bond" evidence="3">
    <location>
        <begin position="151"/>
        <end position="162"/>
    </location>
</feature>
<feature type="disulfide bond" evidence="3">
    <location>
        <begin position="168"/>
        <end position="177"/>
    </location>
</feature>
<feature type="disulfide bond" evidence="3">
    <location>
        <begin position="173"/>
        <end position="186"/>
    </location>
</feature>
<feature type="disulfide bond" evidence="3">
    <location>
        <begin position="188"/>
        <end position="201"/>
    </location>
</feature>
<feature type="disulfide bond" evidence="3">
    <location>
        <begin position="207"/>
        <end position="217"/>
    </location>
</feature>
<feature type="disulfide bond" evidence="3">
    <location>
        <begin position="213"/>
        <end position="226"/>
    </location>
</feature>
<feature type="disulfide bond" evidence="3">
    <location>
        <begin position="228"/>
        <end position="241"/>
    </location>
</feature>
<feature type="disulfide bond" evidence="3">
    <location>
        <begin position="247"/>
        <end position="258"/>
    </location>
</feature>
<feature type="disulfide bond" evidence="3">
    <location>
        <begin position="254"/>
        <end position="267"/>
    </location>
</feature>
<feature type="disulfide bond" evidence="3">
    <location>
        <begin position="269"/>
        <end position="281"/>
    </location>
</feature>
<feature type="disulfide bond" evidence="3">
    <location>
        <begin position="287"/>
        <end position="300"/>
    </location>
</feature>
<feature type="disulfide bond" evidence="3">
    <location>
        <begin position="294"/>
        <end position="309"/>
    </location>
</feature>
<feature type="disulfide bond" evidence="3">
    <location>
        <begin position="315"/>
        <end position="327"/>
    </location>
</feature>
<feature type="mutagenesis site" description="Knockin mutant mice are viable and survive into adulthood. Mice display abnormalities in multiple organ systems, including loose skin, bent forelimb, aortic aneurysm, tortuous artery, and pulmonary emphysema. In addition to elastic fiber abnormalities in the skin and large arteries, collagen fibrils are irregularly shaped, with many large fibrils in the dermis. Mice have large artery stiffness and systolic hypertension. Reduces protein secretion." evidence="12 17">
    <original>E</original>
    <variation>K</variation>
    <location>
        <position position="57"/>
    </location>
</feature>
<feature type="sequence conflict" description="In Ref. 3; AA sequence." evidence="21" ref="3">
    <original>P</original>
    <variation>T</variation>
    <location>
        <position position="30"/>
    </location>
</feature>
<protein>
    <recommendedName>
        <fullName evidence="21">EGF-containing fibulin-like extracellular matrix protein 2</fullName>
    </recommendedName>
    <alternativeName>
        <fullName evidence="20">Fibulin-4</fullName>
        <shortName>FIBL-4</shortName>
    </alternativeName>
    <alternativeName>
        <fullName>Mutant p53-binding protein 1</fullName>
    </alternativeName>
</protein>
<name>FBLN4_MOUSE</name>
<keyword id="KW-0084">Basement membrane</keyword>
<keyword id="KW-0106">Calcium</keyword>
<keyword id="KW-0903">Direct protein sequencing</keyword>
<keyword id="KW-1015">Disulfide bond</keyword>
<keyword id="KW-0245">EGF-like domain</keyword>
<keyword id="KW-0272">Extracellular matrix</keyword>
<keyword id="KW-0325">Glycoprotein</keyword>
<keyword id="KW-0873">Pyrrolidone carboxylic acid</keyword>
<keyword id="KW-1185">Reference proteome</keyword>
<keyword id="KW-0677">Repeat</keyword>
<keyword id="KW-0964">Secreted</keyword>
<keyword id="KW-0732">Signal</keyword>
<dbReference type="EMBL" id="AF104223">
    <property type="protein sequence ID" value="AAD45219.1"/>
    <property type="molecule type" value="mRNA"/>
</dbReference>
<dbReference type="EMBL" id="BC012269">
    <property type="protein sequence ID" value="AAH12269.1"/>
    <property type="molecule type" value="mRNA"/>
</dbReference>
<dbReference type="CCDS" id="CCDS29466.1"/>
<dbReference type="RefSeq" id="NP_067449.3">
    <property type="nucleotide sequence ID" value="NM_021474.3"/>
</dbReference>
<dbReference type="RefSeq" id="XP_006531871.1">
    <property type="nucleotide sequence ID" value="XM_006531808.1"/>
</dbReference>
<dbReference type="RefSeq" id="XP_030106873.1">
    <property type="nucleotide sequence ID" value="XM_030251013.1"/>
</dbReference>
<dbReference type="BioGRID" id="208447">
    <property type="interactions" value="3"/>
</dbReference>
<dbReference type="FunCoup" id="Q9WVJ9">
    <property type="interactions" value="236"/>
</dbReference>
<dbReference type="IntAct" id="Q9WVJ9">
    <property type="interactions" value="1"/>
</dbReference>
<dbReference type="STRING" id="10090.ENSMUSP00000064719"/>
<dbReference type="GlyCosmos" id="Q9WVJ9">
    <property type="glycosylation" value="2 sites, No reported glycans"/>
</dbReference>
<dbReference type="GlyGen" id="Q9WVJ9">
    <property type="glycosylation" value="2 sites, 2 N-linked glycans (2 sites)"/>
</dbReference>
<dbReference type="PhosphoSitePlus" id="Q9WVJ9"/>
<dbReference type="jPOST" id="Q9WVJ9"/>
<dbReference type="PaxDb" id="10090-ENSMUSP00000064719"/>
<dbReference type="ProteomicsDB" id="271875"/>
<dbReference type="Pumba" id="Q9WVJ9"/>
<dbReference type="Antibodypedia" id="16033">
    <property type="antibodies" value="390 antibodies from 33 providers"/>
</dbReference>
<dbReference type="DNASU" id="58859"/>
<dbReference type="Ensembl" id="ENSMUST00000165485.8">
    <property type="protein sequence ID" value="ENSMUSP00000133016.2"/>
    <property type="gene ID" value="ENSMUSG00000024909.16"/>
</dbReference>
<dbReference type="Ensembl" id="ENSMUST00000166303.9">
    <property type="protein sequence ID" value="ENSMUSP00000128827.3"/>
    <property type="gene ID" value="ENSMUSG00000024909.16"/>
</dbReference>
<dbReference type="GeneID" id="58859"/>
<dbReference type="KEGG" id="mmu:58859"/>
<dbReference type="UCSC" id="uc008gdl.2">
    <property type="organism name" value="mouse"/>
</dbReference>
<dbReference type="AGR" id="MGI:1891209"/>
<dbReference type="CTD" id="30008"/>
<dbReference type="MGI" id="MGI:1891209">
    <property type="gene designation" value="Efemp2"/>
</dbReference>
<dbReference type="VEuPathDB" id="HostDB:ENSMUSG00000024909"/>
<dbReference type="eggNOG" id="KOG1217">
    <property type="taxonomic scope" value="Eukaryota"/>
</dbReference>
<dbReference type="GeneTree" id="ENSGT00940000159437"/>
<dbReference type="HOGENOM" id="CLU_004826_0_1_1"/>
<dbReference type="InParanoid" id="Q9WVJ9"/>
<dbReference type="OMA" id="DPLTEHC"/>
<dbReference type="OrthoDB" id="4062651at2759"/>
<dbReference type="PhylomeDB" id="Q9WVJ9"/>
<dbReference type="Reactome" id="R-MMU-2129379">
    <property type="pathway name" value="Molecules associated with elastic fibres"/>
</dbReference>
<dbReference type="BioGRID-ORCS" id="58859">
    <property type="hits" value="7 hits in 76 CRISPR screens"/>
</dbReference>
<dbReference type="ChiTaRS" id="Efemp2">
    <property type="organism name" value="mouse"/>
</dbReference>
<dbReference type="PRO" id="PR:Q9WVJ9"/>
<dbReference type="Proteomes" id="UP000000589">
    <property type="component" value="Chromosome 19"/>
</dbReference>
<dbReference type="RNAct" id="Q9WVJ9">
    <property type="molecule type" value="protein"/>
</dbReference>
<dbReference type="Bgee" id="ENSMUSG00000024909">
    <property type="expression patterns" value="Expressed in humerus cartilage element and 211 other cell types or tissues"/>
</dbReference>
<dbReference type="ExpressionAtlas" id="Q9WVJ9">
    <property type="expression patterns" value="baseline and differential"/>
</dbReference>
<dbReference type="GO" id="GO:0005604">
    <property type="term" value="C:basement membrane"/>
    <property type="evidence" value="ECO:0000314"/>
    <property type="project" value="UniProtKB"/>
</dbReference>
<dbReference type="GO" id="GO:0062023">
    <property type="term" value="C:collagen-containing extracellular matrix"/>
    <property type="evidence" value="ECO:0007005"/>
    <property type="project" value="BHF-UCL"/>
</dbReference>
<dbReference type="GO" id="GO:0071953">
    <property type="term" value="C:elastic fiber"/>
    <property type="evidence" value="ECO:0000315"/>
    <property type="project" value="UniProtKB"/>
</dbReference>
<dbReference type="GO" id="GO:0031012">
    <property type="term" value="C:extracellular matrix"/>
    <property type="evidence" value="ECO:0000314"/>
    <property type="project" value="UniProtKB"/>
</dbReference>
<dbReference type="GO" id="GO:0005615">
    <property type="term" value="C:extracellular space"/>
    <property type="evidence" value="ECO:0007005"/>
    <property type="project" value="BHF-UCL"/>
</dbReference>
<dbReference type="GO" id="GO:0001527">
    <property type="term" value="C:microfibril"/>
    <property type="evidence" value="ECO:0000314"/>
    <property type="project" value="UniProtKB"/>
</dbReference>
<dbReference type="GO" id="GO:0005509">
    <property type="term" value="F:calcium ion binding"/>
    <property type="evidence" value="ECO:0007669"/>
    <property type="project" value="InterPro"/>
</dbReference>
<dbReference type="GO" id="GO:0008201">
    <property type="term" value="F:heparin binding"/>
    <property type="evidence" value="ECO:0000250"/>
    <property type="project" value="UniProtKB"/>
</dbReference>
<dbReference type="GO" id="GO:0042803">
    <property type="term" value="F:protein homodimerization activity"/>
    <property type="evidence" value="ECO:0000250"/>
    <property type="project" value="UniProtKB"/>
</dbReference>
<dbReference type="GO" id="GO:0035904">
    <property type="term" value="P:aorta development"/>
    <property type="evidence" value="ECO:0000315"/>
    <property type="project" value="UniProtKB"/>
</dbReference>
<dbReference type="GO" id="GO:0060414">
    <property type="term" value="P:aorta smooth muscle tissue morphogenesis"/>
    <property type="evidence" value="ECO:0000315"/>
    <property type="project" value="UniProtKB"/>
</dbReference>
<dbReference type="GO" id="GO:0060840">
    <property type="term" value="P:artery development"/>
    <property type="evidence" value="ECO:0000315"/>
    <property type="project" value="MGI"/>
</dbReference>
<dbReference type="GO" id="GO:0048251">
    <property type="term" value="P:elastic fiber assembly"/>
    <property type="evidence" value="ECO:0000315"/>
    <property type="project" value="UniProtKB"/>
</dbReference>
<dbReference type="GO" id="GO:1904706">
    <property type="term" value="P:negative regulation of vascular associated smooth muscle cell proliferation"/>
    <property type="evidence" value="ECO:0000315"/>
    <property type="project" value="UniProtKB"/>
</dbReference>
<dbReference type="GO" id="GO:1904831">
    <property type="term" value="P:positive regulation of aortic smooth muscle cell differentiation"/>
    <property type="evidence" value="ECO:0000315"/>
    <property type="project" value="UniProtKB"/>
</dbReference>
<dbReference type="GO" id="GO:1904028">
    <property type="term" value="P:positive regulation of collagen fibril organization"/>
    <property type="evidence" value="ECO:0000315"/>
    <property type="project" value="UniProtKB"/>
</dbReference>
<dbReference type="GO" id="GO:1905609">
    <property type="term" value="P:positive regulation of smooth muscle cell-matrix adhesion"/>
    <property type="evidence" value="ECO:0000250"/>
    <property type="project" value="UniProtKB"/>
</dbReference>
<dbReference type="GO" id="GO:1904026">
    <property type="term" value="P:regulation of collagen fibril organization"/>
    <property type="evidence" value="ECO:0000315"/>
    <property type="project" value="UniProtKB"/>
</dbReference>
<dbReference type="GO" id="GO:0097084">
    <property type="term" value="P:vascular associated smooth muscle cell development"/>
    <property type="evidence" value="ECO:0000315"/>
    <property type="project" value="UniProtKB"/>
</dbReference>
<dbReference type="CDD" id="cd00054">
    <property type="entry name" value="EGF_CA"/>
    <property type="match status" value="3"/>
</dbReference>
<dbReference type="FunFam" id="2.10.25.10:FF:000201">
    <property type="entry name" value="EGF-containing fibulin-like extracellular matrix protein 2"/>
    <property type="match status" value="1"/>
</dbReference>
<dbReference type="FunFam" id="2.10.25.10:FF:000290">
    <property type="entry name" value="EGF-containing fibulin-like extracellular matrix protein 2"/>
    <property type="match status" value="1"/>
</dbReference>
<dbReference type="FunFam" id="2.10.25.10:FF:000367">
    <property type="entry name" value="EGF-containing fibulin-like extracellular matrix protein 2"/>
    <property type="match status" value="1"/>
</dbReference>
<dbReference type="FunFam" id="2.10.25.10:FF:000210">
    <property type="entry name" value="Hemicentin 1"/>
    <property type="match status" value="1"/>
</dbReference>
<dbReference type="FunFam" id="2.10.25.10:FF:000014">
    <property type="entry name" value="Latent-transforming growth factor beta-binding protein 3"/>
    <property type="match status" value="1"/>
</dbReference>
<dbReference type="Gene3D" id="2.10.25.10">
    <property type="entry name" value="Laminin"/>
    <property type="match status" value="6"/>
</dbReference>
<dbReference type="InterPro" id="IPR026823">
    <property type="entry name" value="cEGF"/>
</dbReference>
<dbReference type="InterPro" id="IPR001881">
    <property type="entry name" value="EGF-like_Ca-bd_dom"/>
</dbReference>
<dbReference type="InterPro" id="IPR013032">
    <property type="entry name" value="EGF-like_CS"/>
</dbReference>
<dbReference type="InterPro" id="IPR000742">
    <property type="entry name" value="EGF-like_dom"/>
</dbReference>
<dbReference type="InterPro" id="IPR000152">
    <property type="entry name" value="EGF-type_Asp/Asn_hydroxyl_site"/>
</dbReference>
<dbReference type="InterPro" id="IPR018097">
    <property type="entry name" value="EGF_Ca-bd_CS"/>
</dbReference>
<dbReference type="InterPro" id="IPR055088">
    <property type="entry name" value="Fibulin_C"/>
</dbReference>
<dbReference type="InterPro" id="IPR009030">
    <property type="entry name" value="Growth_fac_rcpt_cys_sf"/>
</dbReference>
<dbReference type="InterPro" id="IPR052235">
    <property type="entry name" value="Nephronectin_domain"/>
</dbReference>
<dbReference type="InterPro" id="IPR049883">
    <property type="entry name" value="NOTCH1_EGF-like"/>
</dbReference>
<dbReference type="PANTHER" id="PTHR24050">
    <property type="entry name" value="PA14 DOMAIN-CONTAINING PROTEIN"/>
    <property type="match status" value="1"/>
</dbReference>
<dbReference type="PANTHER" id="PTHR24050:SF28">
    <property type="entry name" value="UROMODULIN-LIKE"/>
    <property type="match status" value="1"/>
</dbReference>
<dbReference type="Pfam" id="PF12662">
    <property type="entry name" value="cEGF"/>
    <property type="match status" value="2"/>
</dbReference>
<dbReference type="Pfam" id="PF07645">
    <property type="entry name" value="EGF_CA"/>
    <property type="match status" value="3"/>
</dbReference>
<dbReference type="Pfam" id="PF22914">
    <property type="entry name" value="Fibulin_C"/>
    <property type="match status" value="1"/>
</dbReference>
<dbReference type="Pfam" id="PF12661">
    <property type="entry name" value="hEGF"/>
    <property type="match status" value="1"/>
</dbReference>
<dbReference type="PRINTS" id="PR00907">
    <property type="entry name" value="THRMBOMODULN"/>
</dbReference>
<dbReference type="SMART" id="SM00181">
    <property type="entry name" value="EGF"/>
    <property type="match status" value="5"/>
</dbReference>
<dbReference type="SMART" id="SM00179">
    <property type="entry name" value="EGF_CA"/>
    <property type="match status" value="6"/>
</dbReference>
<dbReference type="SUPFAM" id="SSF57184">
    <property type="entry name" value="Growth factor receptor domain"/>
    <property type="match status" value="3"/>
</dbReference>
<dbReference type="PROSITE" id="PS00010">
    <property type="entry name" value="ASX_HYDROXYL"/>
    <property type="match status" value="4"/>
</dbReference>
<dbReference type="PROSITE" id="PS01186">
    <property type="entry name" value="EGF_2"/>
    <property type="match status" value="4"/>
</dbReference>
<dbReference type="PROSITE" id="PS50026">
    <property type="entry name" value="EGF_3"/>
    <property type="match status" value="4"/>
</dbReference>
<dbReference type="PROSITE" id="PS01187">
    <property type="entry name" value="EGF_CA"/>
    <property type="match status" value="6"/>
</dbReference>
<proteinExistence type="evidence at protein level"/>